<evidence type="ECO:0000255" key="1">
    <source>
        <dbReference type="HAMAP-Rule" id="MF_00607"/>
    </source>
</evidence>
<reference key="1">
    <citation type="journal article" date="2008" name="Environ. Microbiol.">
        <title>The genome of Erwinia tasmaniensis strain Et1/99, a non-pathogenic bacterium in the genus Erwinia.</title>
        <authorList>
            <person name="Kube M."/>
            <person name="Migdoll A.M."/>
            <person name="Mueller I."/>
            <person name="Kuhl H."/>
            <person name="Beck A."/>
            <person name="Reinhardt R."/>
            <person name="Geider K."/>
        </authorList>
    </citation>
    <scope>NUCLEOTIDE SEQUENCE [LARGE SCALE GENOMIC DNA]</scope>
    <source>
        <strain>DSM 17950 / CFBP 7177 / CIP 109463 / NCPPB 4357 / Et1/99</strain>
    </source>
</reference>
<sequence length="273" mass="30600">MNSRVHQGHFARKRFGQNFLNDQYIIDSIVNAIHPQRGEAVVEIGPGLGALTEPVGERLDNMTVVELDRDLAARLQTHPFLGPKLTIFQQDAMTFDFAALAQEKGQPLRVFGNLPYNISTPLMFHLFSYVGAIKDMHFMLQKEVVNRLVAGPGSKAYGRLTVMAQYYCQVIPVLEVPPESFTPAPKVDSAVVRLMPYAQPPHPVNDIRALSRITTEAFGKRRKTLRNSLGHLFTVDVLAEMNIDPTLRAENITVAQYCQLANWLTAHPQPQEN</sequence>
<accession>B2VGP6</accession>
<gene>
    <name evidence="1" type="primary">rsmA</name>
    <name evidence="1" type="synonym">ksgA</name>
    <name type="ordered locus">ETA_07240</name>
</gene>
<dbReference type="EC" id="2.1.1.182" evidence="1"/>
<dbReference type="EMBL" id="CU468135">
    <property type="protein sequence ID" value="CAO95770.1"/>
    <property type="molecule type" value="Genomic_DNA"/>
</dbReference>
<dbReference type="RefSeq" id="WP_012440472.1">
    <property type="nucleotide sequence ID" value="NC_010694.1"/>
</dbReference>
<dbReference type="SMR" id="B2VGP6"/>
<dbReference type="STRING" id="465817.ETA_07240"/>
<dbReference type="KEGG" id="eta:ETA_07240"/>
<dbReference type="eggNOG" id="COG0030">
    <property type="taxonomic scope" value="Bacteria"/>
</dbReference>
<dbReference type="HOGENOM" id="CLU_041220_0_1_6"/>
<dbReference type="OrthoDB" id="9814755at2"/>
<dbReference type="Proteomes" id="UP000001726">
    <property type="component" value="Chromosome"/>
</dbReference>
<dbReference type="GO" id="GO:0005829">
    <property type="term" value="C:cytosol"/>
    <property type="evidence" value="ECO:0007669"/>
    <property type="project" value="TreeGrafter"/>
</dbReference>
<dbReference type="GO" id="GO:0052908">
    <property type="term" value="F:16S rRNA (adenine(1518)-N(6)/adenine(1519)-N(6))-dimethyltransferase activity"/>
    <property type="evidence" value="ECO:0007669"/>
    <property type="project" value="UniProtKB-EC"/>
</dbReference>
<dbReference type="GO" id="GO:0003723">
    <property type="term" value="F:RNA binding"/>
    <property type="evidence" value="ECO:0007669"/>
    <property type="project" value="UniProtKB-KW"/>
</dbReference>
<dbReference type="CDD" id="cd02440">
    <property type="entry name" value="AdoMet_MTases"/>
    <property type="match status" value="1"/>
</dbReference>
<dbReference type="FunFam" id="1.10.8.100:FF:000001">
    <property type="entry name" value="Ribosomal RNA small subunit methyltransferase A"/>
    <property type="match status" value="1"/>
</dbReference>
<dbReference type="FunFam" id="3.40.50.150:FF:000006">
    <property type="entry name" value="Ribosomal RNA small subunit methyltransferase A"/>
    <property type="match status" value="1"/>
</dbReference>
<dbReference type="Gene3D" id="1.10.8.100">
    <property type="entry name" value="Ribosomal RNA adenine dimethylase-like, domain 2"/>
    <property type="match status" value="1"/>
</dbReference>
<dbReference type="Gene3D" id="3.40.50.150">
    <property type="entry name" value="Vaccinia Virus protein VP39"/>
    <property type="match status" value="1"/>
</dbReference>
<dbReference type="HAMAP" id="MF_00607">
    <property type="entry name" value="16SrRNA_methyltr_A"/>
    <property type="match status" value="1"/>
</dbReference>
<dbReference type="InterPro" id="IPR001737">
    <property type="entry name" value="KsgA/Erm"/>
</dbReference>
<dbReference type="InterPro" id="IPR023165">
    <property type="entry name" value="rRNA_Ade_diMease-like_C"/>
</dbReference>
<dbReference type="InterPro" id="IPR020596">
    <property type="entry name" value="rRNA_Ade_Mease_Trfase_CS"/>
</dbReference>
<dbReference type="InterPro" id="IPR020598">
    <property type="entry name" value="rRNA_Ade_methylase_Trfase_N"/>
</dbReference>
<dbReference type="InterPro" id="IPR011530">
    <property type="entry name" value="rRNA_adenine_dimethylase"/>
</dbReference>
<dbReference type="InterPro" id="IPR029063">
    <property type="entry name" value="SAM-dependent_MTases_sf"/>
</dbReference>
<dbReference type="NCBIfam" id="TIGR00755">
    <property type="entry name" value="ksgA"/>
    <property type="match status" value="1"/>
</dbReference>
<dbReference type="PANTHER" id="PTHR11727">
    <property type="entry name" value="DIMETHYLADENOSINE TRANSFERASE"/>
    <property type="match status" value="1"/>
</dbReference>
<dbReference type="PANTHER" id="PTHR11727:SF7">
    <property type="entry name" value="DIMETHYLADENOSINE TRANSFERASE-RELATED"/>
    <property type="match status" value="1"/>
</dbReference>
<dbReference type="Pfam" id="PF00398">
    <property type="entry name" value="RrnaAD"/>
    <property type="match status" value="1"/>
</dbReference>
<dbReference type="SMART" id="SM00650">
    <property type="entry name" value="rADc"/>
    <property type="match status" value="1"/>
</dbReference>
<dbReference type="SUPFAM" id="SSF53335">
    <property type="entry name" value="S-adenosyl-L-methionine-dependent methyltransferases"/>
    <property type="match status" value="1"/>
</dbReference>
<dbReference type="PROSITE" id="PS01131">
    <property type="entry name" value="RRNA_A_DIMETH"/>
    <property type="match status" value="1"/>
</dbReference>
<dbReference type="PROSITE" id="PS51689">
    <property type="entry name" value="SAM_RNA_A_N6_MT"/>
    <property type="match status" value="1"/>
</dbReference>
<name>RSMA_ERWT9</name>
<organism>
    <name type="scientific">Erwinia tasmaniensis (strain DSM 17950 / CFBP 7177 / CIP 109463 / NCPPB 4357 / Et1/99)</name>
    <dbReference type="NCBI Taxonomy" id="465817"/>
    <lineage>
        <taxon>Bacteria</taxon>
        <taxon>Pseudomonadati</taxon>
        <taxon>Pseudomonadota</taxon>
        <taxon>Gammaproteobacteria</taxon>
        <taxon>Enterobacterales</taxon>
        <taxon>Erwiniaceae</taxon>
        <taxon>Erwinia</taxon>
    </lineage>
</organism>
<keyword id="KW-0963">Cytoplasm</keyword>
<keyword id="KW-0489">Methyltransferase</keyword>
<keyword id="KW-1185">Reference proteome</keyword>
<keyword id="KW-0694">RNA-binding</keyword>
<keyword id="KW-0698">rRNA processing</keyword>
<keyword id="KW-0949">S-adenosyl-L-methionine</keyword>
<keyword id="KW-0808">Transferase</keyword>
<proteinExistence type="inferred from homology"/>
<feature type="chain" id="PRO_1000130277" description="Ribosomal RNA small subunit methyltransferase A">
    <location>
        <begin position="1"/>
        <end position="273"/>
    </location>
</feature>
<feature type="binding site" evidence="1">
    <location>
        <position position="18"/>
    </location>
    <ligand>
        <name>S-adenosyl-L-methionine</name>
        <dbReference type="ChEBI" id="CHEBI:59789"/>
    </ligand>
</feature>
<feature type="binding site" evidence="1">
    <location>
        <position position="20"/>
    </location>
    <ligand>
        <name>S-adenosyl-L-methionine</name>
        <dbReference type="ChEBI" id="CHEBI:59789"/>
    </ligand>
</feature>
<feature type="binding site" evidence="1">
    <location>
        <position position="45"/>
    </location>
    <ligand>
        <name>S-adenosyl-L-methionine</name>
        <dbReference type="ChEBI" id="CHEBI:59789"/>
    </ligand>
</feature>
<feature type="binding site" evidence="1">
    <location>
        <position position="66"/>
    </location>
    <ligand>
        <name>S-adenosyl-L-methionine</name>
        <dbReference type="ChEBI" id="CHEBI:59789"/>
    </ligand>
</feature>
<feature type="binding site" evidence="1">
    <location>
        <position position="91"/>
    </location>
    <ligand>
        <name>S-adenosyl-L-methionine</name>
        <dbReference type="ChEBI" id="CHEBI:59789"/>
    </ligand>
</feature>
<feature type="binding site" evidence="1">
    <location>
        <position position="113"/>
    </location>
    <ligand>
        <name>S-adenosyl-L-methionine</name>
        <dbReference type="ChEBI" id="CHEBI:59789"/>
    </ligand>
</feature>
<protein>
    <recommendedName>
        <fullName evidence="1">Ribosomal RNA small subunit methyltransferase A</fullName>
        <ecNumber evidence="1">2.1.1.182</ecNumber>
    </recommendedName>
    <alternativeName>
        <fullName evidence="1">16S rRNA (adenine(1518)-N(6)/adenine(1519)-N(6))-dimethyltransferase</fullName>
    </alternativeName>
    <alternativeName>
        <fullName evidence="1">16S rRNA dimethyladenosine transferase</fullName>
    </alternativeName>
    <alternativeName>
        <fullName evidence="1">16S rRNA dimethylase</fullName>
    </alternativeName>
    <alternativeName>
        <fullName evidence="1">S-adenosylmethionine-6-N', N'-adenosyl(rRNA) dimethyltransferase</fullName>
    </alternativeName>
</protein>
<comment type="function">
    <text evidence="1">Specifically dimethylates two adjacent adenosines (A1518 and A1519) in the loop of a conserved hairpin near the 3'-end of 16S rRNA in the 30S particle. May play a critical role in biogenesis of 30S subunits.</text>
</comment>
<comment type="catalytic activity">
    <reaction evidence="1">
        <text>adenosine(1518)/adenosine(1519) in 16S rRNA + 4 S-adenosyl-L-methionine = N(6)-dimethyladenosine(1518)/N(6)-dimethyladenosine(1519) in 16S rRNA + 4 S-adenosyl-L-homocysteine + 4 H(+)</text>
        <dbReference type="Rhea" id="RHEA:19609"/>
        <dbReference type="Rhea" id="RHEA-COMP:10232"/>
        <dbReference type="Rhea" id="RHEA-COMP:10233"/>
        <dbReference type="ChEBI" id="CHEBI:15378"/>
        <dbReference type="ChEBI" id="CHEBI:57856"/>
        <dbReference type="ChEBI" id="CHEBI:59789"/>
        <dbReference type="ChEBI" id="CHEBI:74411"/>
        <dbReference type="ChEBI" id="CHEBI:74493"/>
        <dbReference type="EC" id="2.1.1.182"/>
    </reaction>
</comment>
<comment type="subcellular location">
    <subcellularLocation>
        <location evidence="1">Cytoplasm</location>
    </subcellularLocation>
</comment>
<comment type="similarity">
    <text evidence="1">Belongs to the class I-like SAM-binding methyltransferase superfamily. rRNA adenine N(6)-methyltransferase family. RsmA subfamily.</text>
</comment>